<proteinExistence type="evidence at protein level"/>
<name>H15_HUMAN</name>
<feature type="initiator methionine" description="Removed" evidence="12 14 18 21 22 23 24 27">
    <location>
        <position position="1"/>
    </location>
</feature>
<feature type="chain" id="PRO_0000195909" description="Histone H1.5">
    <location>
        <begin position="2"/>
        <end position="226"/>
    </location>
</feature>
<feature type="domain" description="H15" evidence="4">
    <location>
        <begin position="39"/>
        <end position="112"/>
    </location>
</feature>
<feature type="region of interest" description="Disordered" evidence="5">
    <location>
        <begin position="1"/>
        <end position="44"/>
    </location>
</feature>
<feature type="region of interest" description="Disordered" evidence="5">
    <location>
        <begin position="98"/>
        <end position="226"/>
    </location>
</feature>
<feature type="compositionally biased region" description="Low complexity" evidence="5">
    <location>
        <begin position="1"/>
        <end position="16"/>
    </location>
</feature>
<feature type="compositionally biased region" description="Basic residues" evidence="5">
    <location>
        <begin position="122"/>
        <end position="133"/>
    </location>
</feature>
<feature type="compositionally biased region" description="Basic residues" evidence="5">
    <location>
        <begin position="140"/>
        <end position="161"/>
    </location>
</feature>
<feature type="compositionally biased region" description="Basic residues" evidence="5">
    <location>
        <begin position="169"/>
        <end position="187"/>
    </location>
</feature>
<feature type="compositionally biased region" description="Basic residues" evidence="5">
    <location>
        <begin position="194"/>
        <end position="226"/>
    </location>
</feature>
<feature type="modified residue" description="N-acetylserine; partial" evidence="14 18 21 22 23 24 27">
    <location>
        <position position="2"/>
    </location>
</feature>
<feature type="modified residue" description="Phosphoserine" evidence="22">
    <location>
        <position position="2"/>
    </location>
</feature>
<feature type="modified residue" description="Phosphothreonine; by GSK3" evidence="8 10 17 25">
    <location>
        <position position="11"/>
    </location>
</feature>
<feature type="modified residue" description="N6-acetyllysine" evidence="2">
    <location>
        <position position="17"/>
    </location>
</feature>
<feature type="modified residue" description="Phosphoserine" evidence="8 17 20 21 22 25 26">
    <location>
        <position position="18"/>
    </location>
</feature>
<feature type="modified residue" description="N6-methyllysine" evidence="11">
    <location>
        <position position="27"/>
    </location>
</feature>
<feature type="modified residue" description="N6-(beta-hydroxybutyryl)lysine; alternate" evidence="3">
    <location>
        <position position="37"/>
    </location>
</feature>
<feature type="modified residue" description="N6-succinyllysine; alternate" evidence="2">
    <location>
        <position position="37"/>
    </location>
</feature>
<feature type="modified residue" description="Phosphothreonine" evidence="17">
    <location>
        <position position="39"/>
    </location>
</feature>
<feature type="modified residue" description="N6-acetyllysine" evidence="2">
    <location>
        <position position="49"/>
    </location>
</feature>
<feature type="modified residue" description="N6-(beta-hydroxybutyryl)lysine" evidence="3">
    <location>
        <position position="55"/>
    </location>
</feature>
<feature type="modified residue" description="Citrulline" evidence="2">
    <location>
        <position position="57"/>
    </location>
</feature>
<feature type="modified residue" description="N6-(beta-hydroxybutyryl)lysine" evidence="3">
    <location>
        <position position="67"/>
    </location>
</feature>
<feature type="modified residue" description="N6-acetyllysine" evidence="2">
    <location>
        <position position="78"/>
    </location>
</feature>
<feature type="modified residue" description="N6-(beta-hydroxybutyryl)lysine" evidence="3">
    <location>
        <position position="88"/>
    </location>
</feature>
<feature type="modified residue" description="N6-(beta-hydroxybutyryl)lysine" evidence="3">
    <location>
        <position position="93"/>
    </location>
</feature>
<feature type="modified residue" description="N6-(beta-hydroxybutyryl)lysine" evidence="3">
    <location>
        <position position="109"/>
    </location>
</feature>
<feature type="modified residue" description="Phosphothreonine" evidence="8 21 22">
    <location>
        <position position="138"/>
    </location>
</feature>
<feature type="modified residue" description="Phosphothreonine" evidence="8">
    <location>
        <position position="155"/>
    </location>
</feature>
<feature type="modified residue" description="N6-acetyllysine" evidence="19">
    <location>
        <position position="168"/>
    </location>
</feature>
<feature type="modified residue" description="Phosphoserine" evidence="8">
    <location>
        <position position="173"/>
    </location>
</feature>
<feature type="modified residue" description="Phosphoserine" evidence="8">
    <location>
        <position position="189"/>
    </location>
</feature>
<feature type="sequence variant" id="VAR_036204" description="In a colorectal cancer sample; somatic mutation." evidence="9">
    <original>G</original>
    <variation>D</variation>
    <location>
        <position position="86"/>
    </location>
</feature>
<feature type="sequence variant" id="VAR_049308" description="In dbSNP:rs11970638.">
    <original>K</original>
    <variation>R</variation>
    <location>
        <position position="144"/>
    </location>
</feature>
<feature type="sequence variant" id="VAR_049309" description="In dbSNP:rs34144478.">
    <original>A</original>
    <variation>T</variation>
    <location>
        <position position="211"/>
    </location>
</feature>
<feature type="sequence conflict" description="In Ref. 5; AA sequence." evidence="15" ref="5">
    <location>
        <begin position="216"/>
        <end position="218"/>
    </location>
</feature>
<accession>P16401</accession>
<accession>Q14529</accession>
<accession>Q3MJ42</accession>
<organism>
    <name type="scientific">Homo sapiens</name>
    <name type="common">Human</name>
    <dbReference type="NCBI Taxonomy" id="9606"/>
    <lineage>
        <taxon>Eukaryota</taxon>
        <taxon>Metazoa</taxon>
        <taxon>Chordata</taxon>
        <taxon>Craniata</taxon>
        <taxon>Vertebrata</taxon>
        <taxon>Euteleostomi</taxon>
        <taxon>Mammalia</taxon>
        <taxon>Eutheria</taxon>
        <taxon>Euarchontoglires</taxon>
        <taxon>Primates</taxon>
        <taxon>Haplorrhini</taxon>
        <taxon>Catarrhini</taxon>
        <taxon>Hominidae</taxon>
        <taxon>Homo</taxon>
    </lineage>
</organism>
<comment type="function">
    <text evidence="1">Histone H1 protein binds to linker DNA between nucleosomes forming the macromolecular structure known as the chromatin fiber. Histones H1 are necessary for the condensation of nucleosome chains into higher-order structured fibers. Also acts as a regulator of individual gene transcription through chromatin remodeling, nucleosome spacing and DNA methylation (By similarity).</text>
</comment>
<comment type="subunit">
    <text evidence="2">Interacts with MSX1.</text>
</comment>
<comment type="interaction">
    <interactant intactId="EBI-5327611">
        <id>P16401</id>
    </interactant>
    <interactant intactId="EBI-712912">
        <id>Q9HC52</id>
        <label>CBX8</label>
    </interactant>
    <organismsDiffer>false</organismsDiffer>
    <experiments>2</experiments>
</comment>
<comment type="interaction">
    <interactant intactId="EBI-5327611">
        <id>P16401</id>
    </interactant>
    <interactant intactId="EBI-295799">
        <id>Q03188</id>
        <label>CENPC</label>
    </interactant>
    <organismsDiffer>false</organismsDiffer>
    <experiments>2</experiments>
</comment>
<comment type="interaction">
    <interactant intactId="EBI-5327611">
        <id>P16401</id>
    </interactant>
    <interactant intactId="EBI-1211456">
        <id>Q7L2E3</id>
        <label>DHX30</label>
    </interactant>
    <organismsDiffer>false</organismsDiffer>
    <experiments>2</experiments>
</comment>
<comment type="interaction">
    <interactant intactId="EBI-5327611">
        <id>P16401</id>
    </interactant>
    <interactant intactId="EBI-1642157">
        <id>Q8IUE6</id>
        <label>H2AC21</label>
    </interactant>
    <organismsDiffer>false</organismsDiffer>
    <experiments>2</experiments>
</comment>
<comment type="interaction">
    <interactant intactId="EBI-5327611">
        <id>P16401</id>
    </interactant>
    <interactant intactId="EBI-346967">
        <id>P19338</id>
        <label>NCL</label>
    </interactant>
    <organismsDiffer>false</organismsDiffer>
    <experiments>2</experiments>
</comment>
<comment type="interaction">
    <interactant intactId="EBI-5327611">
        <id>P16401</id>
    </interactant>
    <interactant intactId="EBI-354451">
        <id>P39019</id>
        <label>RPS19</label>
    </interactant>
    <organismsDiffer>false</organismsDiffer>
    <experiments>2</experiments>
</comment>
<comment type="subcellular location">
    <subcellularLocation>
        <location evidence="6 7">Nucleus</location>
    </subcellularLocation>
    <subcellularLocation>
        <location>Chromosome</location>
    </subcellularLocation>
    <text evidence="6 7">Mainly localizes with heterochromatin (PubMed:15911621). Associates with actively transcribed chromatin and not heterochromatin (PubMed:10997781).</text>
</comment>
<comment type="tissue specificity">
    <text evidence="13">Ubiquitous. Expressed in the majority of the cell lines tested and in testis.</text>
</comment>
<comment type="domain">
    <text evidence="1">The C-terminal domain is required for high-affinity binding to chromatin.</text>
</comment>
<comment type="PTM">
    <text evidence="1 8 10">H1 histones are progressively phosphorylated during the cell cycle, becoming maximally phosphorylated during late G2 phase and M phase, and being dephosphorylated sharply thereafter (By similarity). Phosphorylated at Thr-11 by GSK3B during mitosis in prometaphase and dephosphorylated in telophase.</text>
</comment>
<comment type="PTM">
    <text evidence="2">Citrullination at Arg-57 (H1R54ci) by PADI4 takes place within the DNA-binding site of H1 and results in its displacement from chromatin and global chromatin decondensation, thereby promoting pluripotency and stem cell maintenance.</text>
</comment>
<comment type="similarity">
    <text evidence="4">Belongs to the histone H1/H5 family.</text>
</comment>
<sequence length="226" mass="22580">MSETAPAETATPAPVEKSPAKKKATKKAAGAGAAKRKATGPPVSELITKAVAASKERNGLSLAALKKALAAGGYDVEKNNSRIKLGLKSLVSKGTLVQTKGTGASGSFKLNKKAASGEAKPKAKKAGAAKAKKPAGATPKKAKKAAGAKKAVKKTPKKAKKPAAAGVKKVAKSPKKAKAAAKPKKATKSPAKPKAVKPKAAKPKAAKPKAAKPKAAKAKKAAAKKK</sequence>
<protein>
    <recommendedName>
        <fullName>Histone H1.5</fullName>
    </recommendedName>
    <alternativeName>
        <fullName>Histone H1a</fullName>
    </alternativeName>
    <alternativeName>
        <fullName>Histone H1b</fullName>
    </alternativeName>
    <alternativeName>
        <fullName>Histone H1s-3</fullName>
    </alternativeName>
</protein>
<gene>
    <name evidence="16" type="primary">H1-5</name>
    <name type="synonym">H1F5</name>
    <name evidence="16" type="synonym">HIST1H1B</name>
</gene>
<evidence type="ECO:0000250" key="1"/>
<evidence type="ECO:0000250" key="2">
    <source>
        <dbReference type="UniProtKB" id="P43276"/>
    </source>
</evidence>
<evidence type="ECO:0000250" key="3">
    <source>
        <dbReference type="UniProtKB" id="P43277"/>
    </source>
</evidence>
<evidence type="ECO:0000255" key="4">
    <source>
        <dbReference type="PROSITE-ProRule" id="PRU00837"/>
    </source>
</evidence>
<evidence type="ECO:0000256" key="5">
    <source>
        <dbReference type="SAM" id="MobiDB-lite"/>
    </source>
</evidence>
<evidence type="ECO:0000269" key="6">
    <source>
    </source>
</evidence>
<evidence type="ECO:0000269" key="7">
    <source>
    </source>
</evidence>
<evidence type="ECO:0000269" key="8">
    <source>
    </source>
</evidence>
<evidence type="ECO:0000269" key="9">
    <source>
    </source>
</evidence>
<evidence type="ECO:0000269" key="10">
    <source>
    </source>
</evidence>
<evidence type="ECO:0000269" key="11">
    <source>
    </source>
</evidence>
<evidence type="ECO:0000269" key="12">
    <source>
    </source>
</evidence>
<evidence type="ECO:0000269" key="13">
    <source>
    </source>
</evidence>
<evidence type="ECO:0000269" key="14">
    <source ref="6"/>
</evidence>
<evidence type="ECO:0000305" key="15"/>
<evidence type="ECO:0000312" key="16">
    <source>
        <dbReference type="HGNC" id="HGNC:4719"/>
    </source>
</evidence>
<evidence type="ECO:0007744" key="17">
    <source>
    </source>
</evidence>
<evidence type="ECO:0007744" key="18">
    <source>
    </source>
</evidence>
<evidence type="ECO:0007744" key="19">
    <source>
    </source>
</evidence>
<evidence type="ECO:0007744" key="20">
    <source>
    </source>
</evidence>
<evidence type="ECO:0007744" key="21">
    <source>
    </source>
</evidence>
<evidence type="ECO:0007744" key="22">
    <source>
    </source>
</evidence>
<evidence type="ECO:0007744" key="23">
    <source>
    </source>
</evidence>
<evidence type="ECO:0007744" key="24">
    <source>
    </source>
</evidence>
<evidence type="ECO:0007744" key="25">
    <source>
    </source>
</evidence>
<evidence type="ECO:0007744" key="26">
    <source>
    </source>
</evidence>
<evidence type="ECO:0007744" key="27">
    <source>
    </source>
</evidence>
<dbReference type="EMBL" id="X83509">
    <property type="protein sequence ID" value="CAA58498.1"/>
    <property type="molecule type" value="Genomic_DNA"/>
</dbReference>
<dbReference type="EMBL" id="AF531304">
    <property type="protein sequence ID" value="AAN06704.1"/>
    <property type="molecule type" value="Genomic_DNA"/>
</dbReference>
<dbReference type="EMBL" id="Z98744">
    <property type="status" value="NOT_ANNOTATED_CDS"/>
    <property type="molecule type" value="Genomic_DNA"/>
</dbReference>
<dbReference type="EMBL" id="BC069101">
    <property type="protein sequence ID" value="AAH69101.1"/>
    <property type="molecule type" value="mRNA"/>
</dbReference>
<dbReference type="EMBL" id="BC101581">
    <property type="protein sequence ID" value="AAI01582.1"/>
    <property type="molecule type" value="mRNA"/>
</dbReference>
<dbReference type="EMBL" id="BC101583">
    <property type="protein sequence ID" value="AAI01584.1"/>
    <property type="molecule type" value="mRNA"/>
</dbReference>
<dbReference type="CCDS" id="CCDS4635.1"/>
<dbReference type="PIR" id="S51660">
    <property type="entry name" value="S51660"/>
</dbReference>
<dbReference type="RefSeq" id="NP_005313.1">
    <property type="nucleotide sequence ID" value="NM_005322.3"/>
</dbReference>
<dbReference type="PDB" id="2RHI">
    <property type="method" value="X-ray"/>
    <property type="resolution" value="1.66 A"/>
    <property type="chains" value="B=23-27"/>
</dbReference>
<dbReference type="PDBsum" id="2RHI"/>
<dbReference type="SMR" id="P16401"/>
<dbReference type="BioGRID" id="109264">
    <property type="interactions" value="624"/>
</dbReference>
<dbReference type="FunCoup" id="P16401">
    <property type="interactions" value="1415"/>
</dbReference>
<dbReference type="IntAct" id="P16401">
    <property type="interactions" value="328"/>
</dbReference>
<dbReference type="MINT" id="P16401"/>
<dbReference type="STRING" id="9606.ENSP00000330074"/>
<dbReference type="GlyGen" id="P16401">
    <property type="glycosylation" value="2 sites, 1 O-linked glycan (1 site)"/>
</dbReference>
<dbReference type="iPTMnet" id="P16401"/>
<dbReference type="PhosphoSitePlus" id="P16401"/>
<dbReference type="SwissPalm" id="P16401"/>
<dbReference type="BioMuta" id="HIST1H1B"/>
<dbReference type="DMDM" id="19856407"/>
<dbReference type="jPOST" id="P16401"/>
<dbReference type="MassIVE" id="P16401"/>
<dbReference type="PaxDb" id="9606-ENSP00000330074"/>
<dbReference type="PeptideAtlas" id="P16401"/>
<dbReference type="ProteomicsDB" id="53351"/>
<dbReference type="Pumba" id="P16401"/>
<dbReference type="TopDownProteomics" id="P16401"/>
<dbReference type="Antibodypedia" id="54587">
    <property type="antibodies" value="219 antibodies from 22 providers"/>
</dbReference>
<dbReference type="CPTC" id="P16401">
    <property type="antibodies" value="1 antibody"/>
</dbReference>
<dbReference type="DNASU" id="3009"/>
<dbReference type="Ensembl" id="ENST00000331442.5">
    <property type="protein sequence ID" value="ENSP00000330074.4"/>
    <property type="gene ID" value="ENSG00000184357.5"/>
</dbReference>
<dbReference type="GeneID" id="3009"/>
<dbReference type="KEGG" id="hsa:3009"/>
<dbReference type="MANE-Select" id="ENST00000331442.5">
    <property type="protein sequence ID" value="ENSP00000330074.4"/>
    <property type="RefSeq nucleotide sequence ID" value="NM_005322.3"/>
    <property type="RefSeq protein sequence ID" value="NP_005313.1"/>
</dbReference>
<dbReference type="UCSC" id="uc003njx.4">
    <property type="organism name" value="human"/>
</dbReference>
<dbReference type="AGR" id="HGNC:4719"/>
<dbReference type="CTD" id="3009"/>
<dbReference type="DisGeNET" id="3009"/>
<dbReference type="GeneCards" id="H1-5"/>
<dbReference type="HGNC" id="HGNC:4719">
    <property type="gene designation" value="H1-5"/>
</dbReference>
<dbReference type="HPA" id="ENSG00000184357">
    <property type="expression patterns" value="Group enriched (bone marrow, lymphoid tissue)"/>
</dbReference>
<dbReference type="MIM" id="142711">
    <property type="type" value="gene"/>
</dbReference>
<dbReference type="neXtProt" id="NX_P16401"/>
<dbReference type="OpenTargets" id="ENSG00000184357"/>
<dbReference type="PharmGKB" id="PA29097"/>
<dbReference type="VEuPathDB" id="HostDB:ENSG00000184357"/>
<dbReference type="eggNOG" id="KOG4012">
    <property type="taxonomic scope" value="Eukaryota"/>
</dbReference>
<dbReference type="GeneTree" id="ENSGT00940000162950"/>
<dbReference type="HOGENOM" id="CLU_052897_7_0_1"/>
<dbReference type="InParanoid" id="P16401"/>
<dbReference type="OMA" id="TARPPYF"/>
<dbReference type="OrthoDB" id="9634976at2759"/>
<dbReference type="PAN-GO" id="P16401">
    <property type="GO annotations" value="5 GO annotations based on evolutionary models"/>
</dbReference>
<dbReference type="PhylomeDB" id="P16401"/>
<dbReference type="TreeFam" id="TF313664"/>
<dbReference type="PathwayCommons" id="P16401"/>
<dbReference type="Reactome" id="R-HSA-140342">
    <property type="pathway name" value="Apoptosis induced DNA fragmentation"/>
</dbReference>
<dbReference type="Reactome" id="R-HSA-2559584">
    <property type="pathway name" value="Formation of Senescence-Associated Heterochromatin Foci (SAHF)"/>
</dbReference>
<dbReference type="SignaLink" id="P16401"/>
<dbReference type="SIGNOR" id="P16401"/>
<dbReference type="BioGRID-ORCS" id="3009">
    <property type="hits" value="24 hits in 1139 CRISPR screens"/>
</dbReference>
<dbReference type="CD-CODE" id="91857CE7">
    <property type="entry name" value="Nucleolus"/>
</dbReference>
<dbReference type="EvolutionaryTrace" id="P16401"/>
<dbReference type="GeneWiki" id="HIST1H1B"/>
<dbReference type="GenomeRNAi" id="3009"/>
<dbReference type="Pharos" id="P16401">
    <property type="development level" value="Tbio"/>
</dbReference>
<dbReference type="PRO" id="PR:P16401"/>
<dbReference type="Proteomes" id="UP000005640">
    <property type="component" value="Chromosome 6"/>
</dbReference>
<dbReference type="RNAct" id="P16401">
    <property type="molecule type" value="protein"/>
</dbReference>
<dbReference type="Bgee" id="ENSG00000184357">
    <property type="expression patterns" value="Expressed in bone marrow cell and 75 other cell types or tissues"/>
</dbReference>
<dbReference type="GO" id="GO:0000785">
    <property type="term" value="C:chromatin"/>
    <property type="evidence" value="ECO:0000314"/>
    <property type="project" value="UniProtKB"/>
</dbReference>
<dbReference type="GO" id="GO:0005694">
    <property type="term" value="C:chromosome"/>
    <property type="evidence" value="ECO:0000314"/>
    <property type="project" value="HPA"/>
</dbReference>
<dbReference type="GO" id="GO:0000791">
    <property type="term" value="C:euchromatin"/>
    <property type="evidence" value="ECO:0000318"/>
    <property type="project" value="GO_Central"/>
</dbReference>
<dbReference type="GO" id="GO:0000792">
    <property type="term" value="C:heterochromatin"/>
    <property type="evidence" value="ECO:0000314"/>
    <property type="project" value="UniProtKB"/>
</dbReference>
<dbReference type="GO" id="GO:0005730">
    <property type="term" value="C:nucleolus"/>
    <property type="evidence" value="ECO:0000314"/>
    <property type="project" value="HPA"/>
</dbReference>
<dbReference type="GO" id="GO:0005654">
    <property type="term" value="C:nucleoplasm"/>
    <property type="evidence" value="ECO:0000314"/>
    <property type="project" value="HPA"/>
</dbReference>
<dbReference type="GO" id="GO:0000786">
    <property type="term" value="C:nucleosome"/>
    <property type="evidence" value="ECO:0007669"/>
    <property type="project" value="InterPro"/>
</dbReference>
<dbReference type="GO" id="GO:0005634">
    <property type="term" value="C:nucleus"/>
    <property type="evidence" value="ECO:0000314"/>
    <property type="project" value="UniProtKB"/>
</dbReference>
<dbReference type="GO" id="GO:0031490">
    <property type="term" value="F:chromatin DNA binding"/>
    <property type="evidence" value="ECO:0000315"/>
    <property type="project" value="UniProtKB"/>
</dbReference>
<dbReference type="GO" id="GO:0003690">
    <property type="term" value="F:double-stranded DNA binding"/>
    <property type="evidence" value="ECO:0000318"/>
    <property type="project" value="GO_Central"/>
</dbReference>
<dbReference type="GO" id="GO:0042826">
    <property type="term" value="F:histone deacetylase binding"/>
    <property type="evidence" value="ECO:0000353"/>
    <property type="project" value="UniProtKB"/>
</dbReference>
<dbReference type="GO" id="GO:0031492">
    <property type="term" value="F:nucleosomal DNA binding"/>
    <property type="evidence" value="ECO:0000318"/>
    <property type="project" value="GO_Central"/>
</dbReference>
<dbReference type="GO" id="GO:0003723">
    <property type="term" value="F:RNA binding"/>
    <property type="evidence" value="ECO:0007005"/>
    <property type="project" value="UniProtKB"/>
</dbReference>
<dbReference type="GO" id="GO:0030527">
    <property type="term" value="F:structural constituent of chromatin"/>
    <property type="evidence" value="ECO:0007669"/>
    <property type="project" value="InterPro"/>
</dbReference>
<dbReference type="GO" id="GO:0006325">
    <property type="term" value="P:chromatin organization"/>
    <property type="evidence" value="ECO:0000315"/>
    <property type="project" value="UniProtKB"/>
</dbReference>
<dbReference type="GO" id="GO:0030261">
    <property type="term" value="P:chromosome condensation"/>
    <property type="evidence" value="ECO:0000318"/>
    <property type="project" value="GO_Central"/>
</dbReference>
<dbReference type="GO" id="GO:0071169">
    <property type="term" value="P:establishment of protein localization to chromatin"/>
    <property type="evidence" value="ECO:0000315"/>
    <property type="project" value="UniProtKB"/>
</dbReference>
<dbReference type="GO" id="GO:0007517">
    <property type="term" value="P:muscle organ development"/>
    <property type="evidence" value="ECO:0007669"/>
    <property type="project" value="Ensembl"/>
</dbReference>
<dbReference type="GO" id="GO:0045910">
    <property type="term" value="P:negative regulation of DNA recombination"/>
    <property type="evidence" value="ECO:0000318"/>
    <property type="project" value="GO_Central"/>
</dbReference>
<dbReference type="GO" id="GO:0000122">
    <property type="term" value="P:negative regulation of transcription by RNA polymerase II"/>
    <property type="evidence" value="ECO:0000315"/>
    <property type="project" value="UniProtKB"/>
</dbReference>
<dbReference type="GO" id="GO:0006334">
    <property type="term" value="P:nucleosome assembly"/>
    <property type="evidence" value="ECO:0007669"/>
    <property type="project" value="InterPro"/>
</dbReference>
<dbReference type="GO" id="GO:0050821">
    <property type="term" value="P:protein stabilization"/>
    <property type="evidence" value="ECO:0000315"/>
    <property type="project" value="UniProtKB"/>
</dbReference>
<dbReference type="CDD" id="cd00073">
    <property type="entry name" value="H15"/>
    <property type="match status" value="1"/>
</dbReference>
<dbReference type="FunFam" id="1.10.10.10:FF:000075">
    <property type="entry name" value="Histone H1 like"/>
    <property type="match status" value="1"/>
</dbReference>
<dbReference type="Gene3D" id="1.10.10.10">
    <property type="entry name" value="Winged helix-like DNA-binding domain superfamily/Winged helix DNA-binding domain"/>
    <property type="match status" value="1"/>
</dbReference>
<dbReference type="IDEAL" id="IID00028"/>
<dbReference type="InterPro" id="IPR005819">
    <property type="entry name" value="H1/H5"/>
</dbReference>
<dbReference type="InterPro" id="IPR005818">
    <property type="entry name" value="Histone_H1/H5_H15"/>
</dbReference>
<dbReference type="InterPro" id="IPR036388">
    <property type="entry name" value="WH-like_DNA-bd_sf"/>
</dbReference>
<dbReference type="InterPro" id="IPR036390">
    <property type="entry name" value="WH_DNA-bd_sf"/>
</dbReference>
<dbReference type="Pfam" id="PF00538">
    <property type="entry name" value="Linker_histone"/>
    <property type="match status" value="1"/>
</dbReference>
<dbReference type="PRINTS" id="PR00624">
    <property type="entry name" value="HISTONEH5"/>
</dbReference>
<dbReference type="SMART" id="SM00526">
    <property type="entry name" value="H15"/>
    <property type="match status" value="1"/>
</dbReference>
<dbReference type="SUPFAM" id="SSF46785">
    <property type="entry name" value="Winged helix' DNA-binding domain"/>
    <property type="match status" value="1"/>
</dbReference>
<dbReference type="PROSITE" id="PS51504">
    <property type="entry name" value="H15"/>
    <property type="match status" value="1"/>
</dbReference>
<keyword id="KW-0002">3D-structure</keyword>
<keyword id="KW-0007">Acetylation</keyword>
<keyword id="KW-0158">Chromosome</keyword>
<keyword id="KW-0164">Citrullination</keyword>
<keyword id="KW-0903">Direct protein sequencing</keyword>
<keyword id="KW-0238">DNA-binding</keyword>
<keyword id="KW-0379">Hydroxylation</keyword>
<keyword id="KW-0488">Methylation</keyword>
<keyword id="KW-0539">Nucleus</keyword>
<keyword id="KW-0597">Phosphoprotein</keyword>
<keyword id="KW-1267">Proteomics identification</keyword>
<keyword id="KW-1185">Reference proteome</keyword>
<reference key="1">
    <citation type="journal article" date="1997" name="Gene">
        <title>Characterization of the H1.5 gene completes the set of human H1 subtype genes.</title>
        <authorList>
            <person name="Albig W."/>
            <person name="Meergans T."/>
            <person name="Doenecke D."/>
        </authorList>
    </citation>
    <scope>NUCLEOTIDE SEQUENCE [GENOMIC DNA]</scope>
    <scope>TISSUE SPECIFICITY</scope>
</reference>
<reference key="2">
    <citation type="journal article" date="2002" name="Genomics">
        <title>The human and mouse replication-dependent histone genes.</title>
        <authorList>
            <person name="Marzluff W.F."/>
            <person name="Gongidi P."/>
            <person name="Woods K.R."/>
            <person name="Jin J."/>
            <person name="Maltais L.J."/>
        </authorList>
    </citation>
    <scope>NUCLEOTIDE SEQUENCE [GENOMIC DNA]</scope>
</reference>
<reference key="3">
    <citation type="journal article" date="2003" name="Nature">
        <title>The DNA sequence and analysis of human chromosome 6.</title>
        <authorList>
            <person name="Mungall A.J."/>
            <person name="Palmer S.A."/>
            <person name="Sims S.K."/>
            <person name="Edwards C.A."/>
            <person name="Ashurst J.L."/>
            <person name="Wilming L."/>
            <person name="Jones M.C."/>
            <person name="Horton R."/>
            <person name="Hunt S.E."/>
            <person name="Scott C.E."/>
            <person name="Gilbert J.G.R."/>
            <person name="Clamp M.E."/>
            <person name="Bethel G."/>
            <person name="Milne S."/>
            <person name="Ainscough R."/>
            <person name="Almeida J.P."/>
            <person name="Ambrose K.D."/>
            <person name="Andrews T.D."/>
            <person name="Ashwell R.I.S."/>
            <person name="Babbage A.K."/>
            <person name="Bagguley C.L."/>
            <person name="Bailey J."/>
            <person name="Banerjee R."/>
            <person name="Barker D.J."/>
            <person name="Barlow K.F."/>
            <person name="Bates K."/>
            <person name="Beare D.M."/>
            <person name="Beasley H."/>
            <person name="Beasley O."/>
            <person name="Bird C.P."/>
            <person name="Blakey S.E."/>
            <person name="Bray-Allen S."/>
            <person name="Brook J."/>
            <person name="Brown A.J."/>
            <person name="Brown J.Y."/>
            <person name="Burford D.C."/>
            <person name="Burrill W."/>
            <person name="Burton J."/>
            <person name="Carder C."/>
            <person name="Carter N.P."/>
            <person name="Chapman J.C."/>
            <person name="Clark S.Y."/>
            <person name="Clark G."/>
            <person name="Clee C.M."/>
            <person name="Clegg S."/>
            <person name="Cobley V."/>
            <person name="Collier R.E."/>
            <person name="Collins J.E."/>
            <person name="Colman L.K."/>
            <person name="Corby N.R."/>
            <person name="Coville G.J."/>
            <person name="Culley K.M."/>
            <person name="Dhami P."/>
            <person name="Davies J."/>
            <person name="Dunn M."/>
            <person name="Earthrowl M.E."/>
            <person name="Ellington A.E."/>
            <person name="Evans K.A."/>
            <person name="Faulkner L."/>
            <person name="Francis M.D."/>
            <person name="Frankish A."/>
            <person name="Frankland J."/>
            <person name="French L."/>
            <person name="Garner P."/>
            <person name="Garnett J."/>
            <person name="Ghori M.J."/>
            <person name="Gilby L.M."/>
            <person name="Gillson C.J."/>
            <person name="Glithero R.J."/>
            <person name="Grafham D.V."/>
            <person name="Grant M."/>
            <person name="Gribble S."/>
            <person name="Griffiths C."/>
            <person name="Griffiths M.N.D."/>
            <person name="Hall R."/>
            <person name="Halls K.S."/>
            <person name="Hammond S."/>
            <person name="Harley J.L."/>
            <person name="Hart E.A."/>
            <person name="Heath P.D."/>
            <person name="Heathcott R."/>
            <person name="Holmes S.J."/>
            <person name="Howden P.J."/>
            <person name="Howe K.L."/>
            <person name="Howell G.R."/>
            <person name="Huckle E."/>
            <person name="Humphray S.J."/>
            <person name="Humphries M.D."/>
            <person name="Hunt A.R."/>
            <person name="Johnson C.M."/>
            <person name="Joy A.A."/>
            <person name="Kay M."/>
            <person name="Keenan S.J."/>
            <person name="Kimberley A.M."/>
            <person name="King A."/>
            <person name="Laird G.K."/>
            <person name="Langford C."/>
            <person name="Lawlor S."/>
            <person name="Leongamornlert D.A."/>
            <person name="Leversha M."/>
            <person name="Lloyd C.R."/>
            <person name="Lloyd D.M."/>
            <person name="Loveland J.E."/>
            <person name="Lovell J."/>
            <person name="Martin S."/>
            <person name="Mashreghi-Mohammadi M."/>
            <person name="Maslen G.L."/>
            <person name="Matthews L."/>
            <person name="McCann O.T."/>
            <person name="McLaren S.J."/>
            <person name="McLay K."/>
            <person name="McMurray A."/>
            <person name="Moore M.J.F."/>
            <person name="Mullikin J.C."/>
            <person name="Niblett D."/>
            <person name="Nickerson T."/>
            <person name="Novik K.L."/>
            <person name="Oliver K."/>
            <person name="Overton-Larty E.K."/>
            <person name="Parker A."/>
            <person name="Patel R."/>
            <person name="Pearce A.V."/>
            <person name="Peck A.I."/>
            <person name="Phillimore B.J.C.T."/>
            <person name="Phillips S."/>
            <person name="Plumb R.W."/>
            <person name="Porter K.M."/>
            <person name="Ramsey Y."/>
            <person name="Ranby S.A."/>
            <person name="Rice C.M."/>
            <person name="Ross M.T."/>
            <person name="Searle S.M."/>
            <person name="Sehra H.K."/>
            <person name="Sheridan E."/>
            <person name="Skuce C.D."/>
            <person name="Smith S."/>
            <person name="Smith M."/>
            <person name="Spraggon L."/>
            <person name="Squares S.L."/>
            <person name="Steward C.A."/>
            <person name="Sycamore N."/>
            <person name="Tamlyn-Hall G."/>
            <person name="Tester J."/>
            <person name="Theaker A.J."/>
            <person name="Thomas D.W."/>
            <person name="Thorpe A."/>
            <person name="Tracey A."/>
            <person name="Tromans A."/>
            <person name="Tubby B."/>
            <person name="Wall M."/>
            <person name="Wallis J.M."/>
            <person name="West A.P."/>
            <person name="White S.S."/>
            <person name="Whitehead S.L."/>
            <person name="Whittaker H."/>
            <person name="Wild A."/>
            <person name="Willey D.J."/>
            <person name="Wilmer T.E."/>
            <person name="Wood J.M."/>
            <person name="Wray P.W."/>
            <person name="Wyatt J.C."/>
            <person name="Young L."/>
            <person name="Younger R.M."/>
            <person name="Bentley D.R."/>
            <person name="Coulson A."/>
            <person name="Durbin R.M."/>
            <person name="Hubbard T."/>
            <person name="Sulston J.E."/>
            <person name="Dunham I."/>
            <person name="Rogers J."/>
            <person name="Beck S."/>
        </authorList>
    </citation>
    <scope>NUCLEOTIDE SEQUENCE [LARGE SCALE GENOMIC DNA]</scope>
</reference>
<reference key="4">
    <citation type="journal article" date="2004" name="Genome Res.">
        <title>The status, quality, and expansion of the NIH full-length cDNA project: the Mammalian Gene Collection (MGC).</title>
        <authorList>
            <consortium name="The MGC Project Team"/>
        </authorList>
    </citation>
    <scope>NUCLEOTIDE SEQUENCE [LARGE SCALE MRNA]</scope>
    <source>
        <tissue>Liver</tissue>
    </source>
</reference>
<reference key="5">
    <citation type="journal article" date="1989" name="J. Biochem.">
        <title>Human spleen histone H1. Isolation and amino acid sequences of three minor variants, H1a, H1c, and H1d.</title>
        <authorList>
            <person name="Ohe Y."/>
            <person name="Hayashi H."/>
            <person name="Iwai K."/>
        </authorList>
    </citation>
    <scope>PROTEIN SEQUENCE OF 2-226</scope>
    <source>
        <tissue>Spleen</tissue>
    </source>
</reference>
<reference key="6">
    <citation type="submission" date="2008-12" db="UniProtKB">
        <authorList>
            <person name="Bienvenut W.V."/>
            <person name="Lilla S."/>
            <person name="von Kriegsheim A."/>
            <person name="Lempens A."/>
            <person name="Kolch W."/>
        </authorList>
    </citation>
    <scope>PROTEIN SEQUENCE OF 2-17; 37-49; 58-78 AND 89-100</scope>
    <scope>CLEAVAGE OF INITIATOR METHIONINE</scope>
    <scope>ACETYLATION AT SER-2</scope>
    <scope>IDENTIFICATION BY MASS SPECTROMETRY</scope>
    <source>
        <tissue>Ovarian carcinoma</tissue>
    </source>
</reference>
<reference key="7">
    <citation type="journal article" date="2000" name="Chromosome Res.">
        <title>The distribution of somatic H1 subtypes is non-random on active vs. inactive chromatin: distribution in human fetal fibroblasts.</title>
        <authorList>
            <person name="Parseghian M.H."/>
            <person name="Newcomb R.L."/>
            <person name="Winokur S.T."/>
            <person name="Hamkalo B.A."/>
        </authorList>
    </citation>
    <scope>SUBCELLULAR LOCATION</scope>
</reference>
<reference key="8">
    <citation type="journal article" date="2001" name="J. Cell. Biochem.">
        <title>Distribution of somatic H1 subtypes is non-random on active vs. inactive chromatin II: distribution in human adult fibroblasts.</title>
        <authorList>
            <person name="Parseghian M.H."/>
            <person name="Newcomb R.L."/>
            <person name="Hamkalo B.A."/>
        </authorList>
    </citation>
    <scope>SUBCELLULAR LOCATION</scope>
</reference>
<reference key="9">
    <citation type="journal article" date="2005" name="J. Biol. Chem.">
        <title>H1 family histones in the nucleus. Control of binding and localization by the C-terminal domain.</title>
        <authorList>
            <person name="Th'ng J.P."/>
            <person name="Sung R."/>
            <person name="Ye M."/>
            <person name="Hendzel M.J."/>
        </authorList>
    </citation>
    <scope>SUBCELLULAR LOCATION</scope>
</reference>
<reference key="10">
    <citation type="journal article" date="2006" name="Cell">
        <title>Global, in vivo, and site-specific phosphorylation dynamics in signaling networks.</title>
        <authorList>
            <person name="Olsen J.V."/>
            <person name="Blagoev B."/>
            <person name="Gnad F."/>
            <person name="Macek B."/>
            <person name="Kumar C."/>
            <person name="Mortensen P."/>
            <person name="Mann M."/>
        </authorList>
    </citation>
    <scope>IDENTIFICATION BY MASS SPECTROMETRY [LARGE SCALE ANALYSIS]</scope>
    <source>
        <tissue>Cervix carcinoma</tissue>
    </source>
</reference>
<reference key="11">
    <citation type="journal article" date="2006" name="J. Biol. Chem.">
        <title>Histone H1 phosphorylation occurs site-specifically during interphase and mitosis: identification of a novel phosphorylation site on histone H1.</title>
        <authorList>
            <person name="Sarg B."/>
            <person name="Helliger W."/>
            <person name="Talasz H."/>
            <person name="Forg B."/>
            <person name="Lindner H.H."/>
        </authorList>
    </citation>
    <scope>PHOSPHORYLATION AT THR-11; SER-18; THR-138; THR-155; SER-173 AND SER-189</scope>
</reference>
<reference key="12">
    <citation type="journal article" date="2008" name="Proc. Natl. Acad. Sci. U.S.A.">
        <title>A quantitative atlas of mitotic phosphorylation.</title>
        <authorList>
            <person name="Dephoure N."/>
            <person name="Zhou C."/>
            <person name="Villen J."/>
            <person name="Beausoleil S.A."/>
            <person name="Bakalarski C.E."/>
            <person name="Elledge S.J."/>
            <person name="Gygi S.P."/>
        </authorList>
    </citation>
    <scope>PHOSPHORYLATION [LARGE SCALE ANALYSIS] AT THR-11; SER-18 AND THR-39</scope>
    <scope>IDENTIFICATION BY MASS SPECTROMETRY [LARGE SCALE ANALYSIS]</scope>
    <source>
        <tissue>Cervix carcinoma</tissue>
    </source>
</reference>
<reference key="13">
    <citation type="journal article" date="2009" name="Anal. Chem.">
        <title>Lys-N and trypsin cover complementary parts of the phosphoproteome in a refined SCX-based approach.</title>
        <authorList>
            <person name="Gauci S."/>
            <person name="Helbig A.O."/>
            <person name="Slijper M."/>
            <person name="Krijgsveld J."/>
            <person name="Heck A.J."/>
            <person name="Mohammed S."/>
        </authorList>
    </citation>
    <scope>ACETYLATION [LARGE SCALE ANALYSIS] AT SER-2</scope>
    <scope>CLEAVAGE OF INITIATOR METHIONINE [LARGE SCALE ANALYSIS]</scope>
    <scope>IDENTIFICATION BY MASS SPECTROMETRY [LARGE SCALE ANALYSIS]</scope>
</reference>
<reference key="14">
    <citation type="journal article" date="2009" name="J. Mol. Biol.">
        <title>M phase-specific phosphorylation of histone H1.5 at threonine 10 by GSK-3.</title>
        <authorList>
            <person name="Happel N."/>
            <person name="Stoldt S."/>
            <person name="Schmidt B."/>
            <person name="Doenecke D."/>
        </authorList>
    </citation>
    <scope>PHOSPHORYLATION AT THR-11 BY GSK3B</scope>
</reference>
<reference key="15">
    <citation type="journal article" date="2009" name="J. Proteome Res.">
        <title>Mapping of lysine monomethylation of linker histones in human breast and its cancer.</title>
        <authorList>
            <person name="Lu A."/>
            <person name="Zougman A."/>
            <person name="Pudelko M."/>
            <person name="Bebenek M."/>
            <person name="Ziolkowski P."/>
            <person name="Mann M."/>
            <person name="Wisniewski J.R."/>
        </authorList>
    </citation>
    <scope>METHYLATION AT LYS-27</scope>
</reference>
<reference key="16">
    <citation type="journal article" date="2009" name="Sci. Signal.">
        <title>Quantitative phosphoproteomic analysis of T cell receptor signaling reveals system-wide modulation of protein-protein interactions.</title>
        <authorList>
            <person name="Mayya V."/>
            <person name="Lundgren D.H."/>
            <person name="Hwang S.-I."/>
            <person name="Rezaul K."/>
            <person name="Wu L."/>
            <person name="Eng J.K."/>
            <person name="Rodionov V."/>
            <person name="Han D.K."/>
        </authorList>
    </citation>
    <scope>PHOSPHORYLATION [LARGE SCALE ANALYSIS] AT SER-18</scope>
    <scope>IDENTIFICATION BY MASS SPECTROMETRY [LARGE SCALE ANALYSIS]</scope>
    <source>
        <tissue>Leukemic T-cell</tissue>
    </source>
</reference>
<reference key="17">
    <citation type="journal article" date="2009" name="Science">
        <title>Lysine acetylation targets protein complexes and co-regulates major cellular functions.</title>
        <authorList>
            <person name="Choudhary C."/>
            <person name="Kumar C."/>
            <person name="Gnad F."/>
            <person name="Nielsen M.L."/>
            <person name="Rehman M."/>
            <person name="Walther T.C."/>
            <person name="Olsen J.V."/>
            <person name="Mann M."/>
        </authorList>
    </citation>
    <scope>ACETYLATION [LARGE SCALE ANALYSIS] AT LYS-168</scope>
    <scope>IDENTIFICATION BY MASS SPECTROMETRY [LARGE SCALE ANALYSIS]</scope>
</reference>
<reference key="18">
    <citation type="journal article" date="2010" name="Sci. Signal.">
        <title>Quantitative phosphoproteomics reveals widespread full phosphorylation site occupancy during mitosis.</title>
        <authorList>
            <person name="Olsen J.V."/>
            <person name="Vermeulen M."/>
            <person name="Santamaria A."/>
            <person name="Kumar C."/>
            <person name="Miller M.L."/>
            <person name="Jensen L.J."/>
            <person name="Gnad F."/>
            <person name="Cox J."/>
            <person name="Jensen T.S."/>
            <person name="Nigg E.A."/>
            <person name="Brunak S."/>
            <person name="Mann M."/>
        </authorList>
    </citation>
    <scope>ACETYLATION [LARGE SCALE ANALYSIS] AT SER-2</scope>
    <scope>PHOSPHORYLATION [LARGE SCALE ANALYSIS] AT SER-18 AND THR-138</scope>
    <scope>CLEAVAGE OF INITIATOR METHIONINE [LARGE SCALE ANALYSIS]</scope>
    <scope>IDENTIFICATION BY MASS SPECTROMETRY [LARGE SCALE ANALYSIS]</scope>
    <source>
        <tissue>Cervix carcinoma</tissue>
    </source>
</reference>
<reference key="19">
    <citation type="journal article" date="2011" name="BMC Syst. Biol.">
        <title>Initial characterization of the human central proteome.</title>
        <authorList>
            <person name="Burkard T.R."/>
            <person name="Planyavsky M."/>
            <person name="Kaupe I."/>
            <person name="Breitwieser F.P."/>
            <person name="Buerckstuemmer T."/>
            <person name="Bennett K.L."/>
            <person name="Superti-Furga G."/>
            <person name="Colinge J."/>
        </authorList>
    </citation>
    <scope>IDENTIFICATION BY MASS SPECTROMETRY [LARGE SCALE ANALYSIS]</scope>
</reference>
<reference key="20">
    <citation type="journal article" date="2011" name="Sci. Signal.">
        <title>System-wide temporal characterization of the proteome and phosphoproteome of human embryonic stem cell differentiation.</title>
        <authorList>
            <person name="Rigbolt K.T."/>
            <person name="Prokhorova T.A."/>
            <person name="Akimov V."/>
            <person name="Henningsen J."/>
            <person name="Johansen P.T."/>
            <person name="Kratchmarova I."/>
            <person name="Kassem M."/>
            <person name="Mann M."/>
            <person name="Olsen J.V."/>
            <person name="Blagoev B."/>
        </authorList>
    </citation>
    <scope>ACETYLATION [LARGE SCALE ANALYSIS] AT SER-2</scope>
    <scope>PHOSPHORYLATION [LARGE SCALE ANALYSIS] AT SER-2; SER-18 AND THR-138</scope>
    <scope>CLEAVAGE OF INITIATOR METHIONINE [LARGE SCALE ANALYSIS]</scope>
    <scope>IDENTIFICATION BY MASS SPECTROMETRY [LARGE SCALE ANALYSIS]</scope>
</reference>
<reference key="21">
    <citation type="journal article" date="2012" name="Mol. Cell. Proteomics">
        <title>Comparative large-scale characterisation of plant vs. mammal proteins reveals similar and idiosyncratic N-alpha acetylation features.</title>
        <authorList>
            <person name="Bienvenut W.V."/>
            <person name="Sumpton D."/>
            <person name="Martinez A."/>
            <person name="Lilla S."/>
            <person name="Espagne C."/>
            <person name="Meinnel T."/>
            <person name="Giglione C."/>
        </authorList>
    </citation>
    <scope>ACETYLATION [LARGE SCALE ANALYSIS] AT SER-2</scope>
    <scope>CLEAVAGE OF INITIATOR METHIONINE [LARGE SCALE ANALYSIS]</scope>
    <scope>IDENTIFICATION BY MASS SPECTROMETRY [LARGE SCALE ANALYSIS]</scope>
</reference>
<reference key="22">
    <citation type="journal article" date="2012" name="Proc. Natl. Acad. Sci. U.S.A.">
        <title>N-terminal acetylome analyses and functional insights of the N-terminal acetyltransferase NatB.</title>
        <authorList>
            <person name="Van Damme P."/>
            <person name="Lasa M."/>
            <person name="Polevoda B."/>
            <person name="Gazquez C."/>
            <person name="Elosegui-Artola A."/>
            <person name="Kim D.S."/>
            <person name="De Juan-Pardo E."/>
            <person name="Demeyer K."/>
            <person name="Hole K."/>
            <person name="Larrea E."/>
            <person name="Timmerman E."/>
            <person name="Prieto J."/>
            <person name="Arnesen T."/>
            <person name="Sherman F."/>
            <person name="Gevaert K."/>
            <person name="Aldabe R."/>
        </authorList>
    </citation>
    <scope>ACETYLATION [LARGE SCALE ANALYSIS] AT SER-2</scope>
    <scope>CLEAVAGE OF INITIATOR METHIONINE [LARGE SCALE ANALYSIS]</scope>
    <scope>IDENTIFICATION BY MASS SPECTROMETRY [LARGE SCALE ANALYSIS]</scope>
</reference>
<reference key="23">
    <citation type="journal article" date="2013" name="J. Proteome Res.">
        <title>Toward a comprehensive characterization of a human cancer cell phosphoproteome.</title>
        <authorList>
            <person name="Zhou H."/>
            <person name="Di Palma S."/>
            <person name="Preisinger C."/>
            <person name="Peng M."/>
            <person name="Polat A.N."/>
            <person name="Heck A.J."/>
            <person name="Mohammed S."/>
        </authorList>
    </citation>
    <scope>PHOSPHORYLATION [LARGE SCALE ANALYSIS] AT THR-11 AND SER-18</scope>
    <scope>IDENTIFICATION BY MASS SPECTROMETRY [LARGE SCALE ANALYSIS]</scope>
    <source>
        <tissue>Cervix carcinoma</tissue>
        <tissue>Erythroleukemia</tissue>
    </source>
</reference>
<reference key="24">
    <citation type="journal article" date="2014" name="J. Proteomics">
        <title>An enzyme assisted RP-RPLC approach for in-depth analysis of human liver phosphoproteome.</title>
        <authorList>
            <person name="Bian Y."/>
            <person name="Song C."/>
            <person name="Cheng K."/>
            <person name="Dong M."/>
            <person name="Wang F."/>
            <person name="Huang J."/>
            <person name="Sun D."/>
            <person name="Wang L."/>
            <person name="Ye M."/>
            <person name="Zou H."/>
        </authorList>
    </citation>
    <scope>PHOSPHORYLATION [LARGE SCALE ANALYSIS] AT SER-18</scope>
    <scope>IDENTIFICATION BY MASS SPECTROMETRY [LARGE SCALE ANALYSIS]</scope>
    <source>
        <tissue>Liver</tissue>
    </source>
</reference>
<reference key="25">
    <citation type="journal article" date="2015" name="Proteomics">
        <title>N-terminome analysis of the human mitochondrial proteome.</title>
        <authorList>
            <person name="Vaca Jacome A.S."/>
            <person name="Rabilloud T."/>
            <person name="Schaeffer-Reiss C."/>
            <person name="Rompais M."/>
            <person name="Ayoub D."/>
            <person name="Lane L."/>
            <person name="Bairoch A."/>
            <person name="Van Dorsselaer A."/>
            <person name="Carapito C."/>
        </authorList>
    </citation>
    <scope>ACETYLATION [LARGE SCALE ANALYSIS] AT SER-2</scope>
    <scope>CLEAVAGE OF INITIATOR METHIONINE [LARGE SCALE ANALYSIS]</scope>
    <scope>IDENTIFICATION BY MASS SPECTROMETRY [LARGE SCALE ANALYSIS]</scope>
</reference>
<reference key="26">
    <citation type="journal article" date="2006" name="Science">
        <title>The consensus coding sequences of human breast and colorectal cancers.</title>
        <authorList>
            <person name="Sjoeblom T."/>
            <person name="Jones S."/>
            <person name="Wood L.D."/>
            <person name="Parsons D.W."/>
            <person name="Lin J."/>
            <person name="Barber T.D."/>
            <person name="Mandelker D."/>
            <person name="Leary R.J."/>
            <person name="Ptak J."/>
            <person name="Silliman N."/>
            <person name="Szabo S."/>
            <person name="Buckhaults P."/>
            <person name="Farrell C."/>
            <person name="Meeh P."/>
            <person name="Markowitz S.D."/>
            <person name="Willis J."/>
            <person name="Dawson D."/>
            <person name="Willson J.K.V."/>
            <person name="Gazdar A.F."/>
            <person name="Hartigan J."/>
            <person name="Wu L."/>
            <person name="Liu C."/>
            <person name="Parmigiani G."/>
            <person name="Park B.H."/>
            <person name="Bachman K.E."/>
            <person name="Papadopoulos N."/>
            <person name="Vogelstein B."/>
            <person name="Kinzler K.W."/>
            <person name="Velculescu V.E."/>
        </authorList>
    </citation>
    <scope>VARIANT [LARGE SCALE ANALYSIS] ASP-86</scope>
</reference>